<name>EFR3_NEUCR</name>
<comment type="similarity">
    <text evidence="2">Belongs to the EFR3 family.</text>
</comment>
<accession>Q7SHX8</accession>
<feature type="chain" id="PRO_0000270782" description="Protein efr-3">
    <location>
        <begin position="1"/>
        <end position="1125"/>
    </location>
</feature>
<feature type="region of interest" description="Disordered" evidence="1">
    <location>
        <begin position="240"/>
        <end position="261"/>
    </location>
</feature>
<feature type="region of interest" description="Disordered" evidence="1">
    <location>
        <begin position="471"/>
        <end position="493"/>
    </location>
</feature>
<feature type="region of interest" description="Disordered" evidence="1">
    <location>
        <begin position="788"/>
        <end position="819"/>
    </location>
</feature>
<feature type="region of interest" description="Disordered" evidence="1">
    <location>
        <begin position="845"/>
        <end position="1093"/>
    </location>
</feature>
<feature type="compositionally biased region" description="Polar residues" evidence="1">
    <location>
        <begin position="242"/>
        <end position="252"/>
    </location>
</feature>
<feature type="compositionally biased region" description="Low complexity" evidence="1">
    <location>
        <begin position="788"/>
        <end position="798"/>
    </location>
</feature>
<feature type="compositionally biased region" description="Polar residues" evidence="1">
    <location>
        <begin position="845"/>
        <end position="854"/>
    </location>
</feature>
<feature type="compositionally biased region" description="Low complexity" evidence="1">
    <location>
        <begin position="855"/>
        <end position="877"/>
    </location>
</feature>
<feature type="compositionally biased region" description="Polar residues" evidence="1">
    <location>
        <begin position="878"/>
        <end position="896"/>
    </location>
</feature>
<feature type="compositionally biased region" description="Polar residues" evidence="1">
    <location>
        <begin position="975"/>
        <end position="1011"/>
    </location>
</feature>
<feature type="compositionally biased region" description="Polar residues" evidence="1">
    <location>
        <begin position="1046"/>
        <end position="1071"/>
    </location>
</feature>
<keyword id="KW-1185">Reference proteome</keyword>
<reference key="1">
    <citation type="journal article" date="2003" name="Nature">
        <title>The genome sequence of the filamentous fungus Neurospora crassa.</title>
        <authorList>
            <person name="Galagan J.E."/>
            <person name="Calvo S.E."/>
            <person name="Borkovich K.A."/>
            <person name="Selker E.U."/>
            <person name="Read N.D."/>
            <person name="Jaffe D.B."/>
            <person name="FitzHugh W."/>
            <person name="Ma L.-J."/>
            <person name="Smirnov S."/>
            <person name="Purcell S."/>
            <person name="Rehman B."/>
            <person name="Elkins T."/>
            <person name="Engels R."/>
            <person name="Wang S."/>
            <person name="Nielsen C.B."/>
            <person name="Butler J."/>
            <person name="Endrizzi M."/>
            <person name="Qui D."/>
            <person name="Ianakiev P."/>
            <person name="Bell-Pedersen D."/>
            <person name="Nelson M.A."/>
            <person name="Werner-Washburne M."/>
            <person name="Selitrennikoff C.P."/>
            <person name="Kinsey J.A."/>
            <person name="Braun E.L."/>
            <person name="Zelter A."/>
            <person name="Schulte U."/>
            <person name="Kothe G.O."/>
            <person name="Jedd G."/>
            <person name="Mewes H.-W."/>
            <person name="Staben C."/>
            <person name="Marcotte E."/>
            <person name="Greenberg D."/>
            <person name="Roy A."/>
            <person name="Foley K."/>
            <person name="Naylor J."/>
            <person name="Stange-Thomann N."/>
            <person name="Barrett R."/>
            <person name="Gnerre S."/>
            <person name="Kamal M."/>
            <person name="Kamvysselis M."/>
            <person name="Mauceli E.W."/>
            <person name="Bielke C."/>
            <person name="Rudd S."/>
            <person name="Frishman D."/>
            <person name="Krystofova S."/>
            <person name="Rasmussen C."/>
            <person name="Metzenberg R.L."/>
            <person name="Perkins D.D."/>
            <person name="Kroken S."/>
            <person name="Cogoni C."/>
            <person name="Macino G."/>
            <person name="Catcheside D.E.A."/>
            <person name="Li W."/>
            <person name="Pratt R.J."/>
            <person name="Osmani S.A."/>
            <person name="DeSouza C.P.C."/>
            <person name="Glass N.L."/>
            <person name="Orbach M.J."/>
            <person name="Berglund J.A."/>
            <person name="Voelker R."/>
            <person name="Yarden O."/>
            <person name="Plamann M."/>
            <person name="Seiler S."/>
            <person name="Dunlap J.C."/>
            <person name="Radford A."/>
            <person name="Aramayo R."/>
            <person name="Natvig D.O."/>
            <person name="Alex L.A."/>
            <person name="Mannhaupt G."/>
            <person name="Ebbole D.J."/>
            <person name="Freitag M."/>
            <person name="Paulsen I."/>
            <person name="Sachs M.S."/>
            <person name="Lander E.S."/>
            <person name="Nusbaum C."/>
            <person name="Birren B.W."/>
        </authorList>
    </citation>
    <scope>NUCLEOTIDE SEQUENCE [LARGE SCALE GENOMIC DNA]</scope>
    <source>
        <strain>ATCC 24698 / 74-OR23-1A / CBS 708.71 / DSM 1257 / FGSC 987</strain>
    </source>
</reference>
<evidence type="ECO:0000256" key="1">
    <source>
        <dbReference type="SAM" id="MobiDB-lite"/>
    </source>
</evidence>
<evidence type="ECO:0000305" key="2"/>
<gene>
    <name type="primary">efr-3</name>
    <name type="ORF">NCU00675</name>
</gene>
<organism>
    <name type="scientific">Neurospora crassa (strain ATCC 24698 / 74-OR23-1A / CBS 708.71 / DSM 1257 / FGSC 987)</name>
    <dbReference type="NCBI Taxonomy" id="367110"/>
    <lineage>
        <taxon>Eukaryota</taxon>
        <taxon>Fungi</taxon>
        <taxon>Dikarya</taxon>
        <taxon>Ascomycota</taxon>
        <taxon>Pezizomycotina</taxon>
        <taxon>Sordariomycetes</taxon>
        <taxon>Sordariomycetidae</taxon>
        <taxon>Sordariales</taxon>
        <taxon>Sordariaceae</taxon>
        <taxon>Neurospora</taxon>
    </lineage>
</organism>
<protein>
    <recommendedName>
        <fullName>Protein efr-3</fullName>
    </recommendedName>
</protein>
<proteinExistence type="inferred from homology"/>
<sequence length="1125" mass="122173">MNALQQKCRPKHQVLVLKCYPRTIKGAVDVKPNSSELSYLLFYCQSRRAKIQKVGSFLEKKTASDVYHQRIGNVQVTLQILAALIEKSPKDLPLFASCVLSILEQVLKSSDITMVESSIPTFQAFCENHDPTSLAADQAYFRQYVSVVQQYASLASTRPAPGKAQHSKPIALRWRNAGLEAIRSVASSDALSSMVARQYDILVPMILENLWTENEDFLDVLLQRVQGDNNVEDAPLLRRRTSNATAQPSETTGGEPGPNPIAFLGTAVDVDKLAEEDIGVLAMQCLRQVFVAPSRSQTHNPTIALLRFIEERVDQNEQVVKRDAHGKDNGWAIKVFLMAARWAPVADRFTILLTAIEVLTQRPLTDDNLRHHNTQAAMISALLRSDVNLIGLSVMDVLLNLLRHMQRLVQMPGDPDSMRVEDETIGTDEGAIGQRRELLFRLQQCVGDLATHVYYADQISDMIQTILLKLRPSRPTSPPNSSPNGERSDNGAAEDQPLESLFALTVAKIAALKAIKAILWVASPRTKMSGGHINLSRNRVPIQTWDGTQWLLRDPDGLVRKAYVDAVVTWLDRETTPADSLARDESARTTLKNRAAQENNLARRVVSSASARVDKSANAPRSHFLQLLHLAIYDHALQFVDYENDLVLLHVLLAKLVSQLGVNAAKFGIPMIFRLQEDIQDVETPLGKVRIGSLVHGYLWTLTEKFDCEGTAPGSAIHGEIIRRRSKNFWVEGINIPAPAVDLVGTPGQARPPPQMNMRDLESEALLPFDERASLVDCICTGYQELATSPPTSPTTSPGRNFTHPMLGSTLSATPKDETQREVPAQFRELMLGDWTREAVLANTQAGSSQTASLNGTNGTHRNTVNNNNRLGVNGVTSPNGSNSNLRPSSSPTGPNGVQAGRTRKTSIRSNGGGGSPAHSTYRAKAQQPVTSVEQLKAVLSGHLQPPPTSHGINFQHSDDSDDSLVSYDMAPSELSFNPAASGSRQGSPGNTSQAASSPPRRTSQDRTQQLKFGGPLVPGEESVVNGAGGQEGSNGAAGNLGVPISRTTSRTQPQATTAHTTLPRPSTSSKRSIKSRAGSRAGPMSSSWLGEKPPAMDLAALLKGIDSASISDIKSLGAGGKPPY</sequence>
<dbReference type="EMBL" id="CM002236">
    <property type="protein sequence ID" value="EAA36579.1"/>
    <property type="molecule type" value="Genomic_DNA"/>
</dbReference>
<dbReference type="RefSeq" id="XP_965815.1">
    <property type="nucleotide sequence ID" value="XM_960722.2"/>
</dbReference>
<dbReference type="STRING" id="367110.Q7SHX8"/>
<dbReference type="PaxDb" id="5141-EFNCRP00000000778"/>
<dbReference type="EnsemblFungi" id="EAA36579">
    <property type="protein sequence ID" value="EAA36579"/>
    <property type="gene ID" value="NCU00675"/>
</dbReference>
<dbReference type="GeneID" id="3881940"/>
<dbReference type="KEGG" id="ncr:NCU00675"/>
<dbReference type="VEuPathDB" id="FungiDB:NCU00675"/>
<dbReference type="HOGENOM" id="CLU_003271_0_0_1"/>
<dbReference type="InParanoid" id="Q7SHX8"/>
<dbReference type="OrthoDB" id="19232at2759"/>
<dbReference type="Proteomes" id="UP000001805">
    <property type="component" value="Chromosome 1, Linkage Group I"/>
</dbReference>
<dbReference type="GO" id="GO:0005886">
    <property type="term" value="C:plasma membrane"/>
    <property type="evidence" value="ECO:0000318"/>
    <property type="project" value="GO_Central"/>
</dbReference>
<dbReference type="GO" id="GO:0072659">
    <property type="term" value="P:protein localization to plasma membrane"/>
    <property type="evidence" value="ECO:0000318"/>
    <property type="project" value="GO_Central"/>
</dbReference>
<dbReference type="InterPro" id="IPR016024">
    <property type="entry name" value="ARM-type_fold"/>
</dbReference>
<dbReference type="InterPro" id="IPR039786">
    <property type="entry name" value="EFR3"/>
</dbReference>
<dbReference type="InterPro" id="IPR049150">
    <property type="entry name" value="EFR3_HEAT-like_rpt"/>
</dbReference>
<dbReference type="PANTHER" id="PTHR47766">
    <property type="entry name" value="PROTEIN EFR3"/>
    <property type="match status" value="1"/>
</dbReference>
<dbReference type="PANTHER" id="PTHR47766:SF1">
    <property type="entry name" value="PROTEIN EFR3"/>
    <property type="match status" value="1"/>
</dbReference>
<dbReference type="Pfam" id="PF21072">
    <property type="entry name" value="EFR3"/>
    <property type="match status" value="1"/>
</dbReference>
<dbReference type="SUPFAM" id="SSF48371">
    <property type="entry name" value="ARM repeat"/>
    <property type="match status" value="1"/>
</dbReference>